<sequence length="106" mass="11602">MSKLHIKKGDTVMVISGEDKGHSGRVLEVLVKEQRAIVEGLNMIKKHAKPSAKNPQGGIISKEAPIHISNLNVVDPKTGKATRIGRRLNENGKLVRYAKKSGEEIK</sequence>
<organism>
    <name type="scientific">Porphyromonas gingivalis (strain ATCC 33277 / DSM 20709 / CIP 103683 / JCM 12257 / NCTC 11834 / 2561)</name>
    <dbReference type="NCBI Taxonomy" id="431947"/>
    <lineage>
        <taxon>Bacteria</taxon>
        <taxon>Pseudomonadati</taxon>
        <taxon>Bacteroidota</taxon>
        <taxon>Bacteroidia</taxon>
        <taxon>Bacteroidales</taxon>
        <taxon>Porphyromonadaceae</taxon>
        <taxon>Porphyromonas</taxon>
    </lineage>
</organism>
<accession>B2RLY1</accession>
<evidence type="ECO:0000255" key="1">
    <source>
        <dbReference type="HAMAP-Rule" id="MF_01326"/>
    </source>
</evidence>
<evidence type="ECO:0000305" key="2"/>
<comment type="function">
    <text evidence="1">One of two assembly initiator proteins, it binds directly to the 5'-end of the 23S rRNA, where it nucleates assembly of the 50S subunit.</text>
</comment>
<comment type="function">
    <text evidence="1">One of the proteins that surrounds the polypeptide exit tunnel on the outside of the subunit.</text>
</comment>
<comment type="subunit">
    <text evidence="1">Part of the 50S ribosomal subunit.</text>
</comment>
<comment type="similarity">
    <text evidence="1">Belongs to the universal ribosomal protein uL24 family.</text>
</comment>
<keyword id="KW-0687">Ribonucleoprotein</keyword>
<keyword id="KW-0689">Ribosomal protein</keyword>
<keyword id="KW-0694">RNA-binding</keyword>
<keyword id="KW-0699">rRNA-binding</keyword>
<feature type="chain" id="PRO_1000142022" description="Large ribosomal subunit protein uL24">
    <location>
        <begin position="1"/>
        <end position="106"/>
    </location>
</feature>
<reference key="1">
    <citation type="journal article" date="2008" name="DNA Res.">
        <title>Determination of the genome sequence of Porphyromonas gingivalis strain ATCC 33277 and genomic comparison with strain W83 revealed extensive genome rearrangements in P. gingivalis.</title>
        <authorList>
            <person name="Naito M."/>
            <person name="Hirakawa H."/>
            <person name="Yamashita A."/>
            <person name="Ohara N."/>
            <person name="Shoji M."/>
            <person name="Yukitake H."/>
            <person name="Nakayama K."/>
            <person name="Toh H."/>
            <person name="Yoshimura F."/>
            <person name="Kuhara S."/>
            <person name="Hattori M."/>
            <person name="Hayashi T."/>
            <person name="Nakayama K."/>
        </authorList>
    </citation>
    <scope>NUCLEOTIDE SEQUENCE [LARGE SCALE GENOMIC DNA]</scope>
    <source>
        <strain>ATCC 33277 / DSM 20709 / CIP 103683 / JCM 12257 / NCTC 11834 / 2561</strain>
    </source>
</reference>
<protein>
    <recommendedName>
        <fullName evidence="1">Large ribosomal subunit protein uL24</fullName>
    </recommendedName>
    <alternativeName>
        <fullName evidence="2">50S ribosomal protein L24</fullName>
    </alternativeName>
</protein>
<proteinExistence type="inferred from homology"/>
<name>RL24_PORG3</name>
<dbReference type="EMBL" id="AP009380">
    <property type="protein sequence ID" value="BAG34376.1"/>
    <property type="molecule type" value="Genomic_DNA"/>
</dbReference>
<dbReference type="RefSeq" id="WP_004583587.1">
    <property type="nucleotide sequence ID" value="NZ_CP025930.1"/>
</dbReference>
<dbReference type="SMR" id="B2RLY1"/>
<dbReference type="GeneID" id="57239585"/>
<dbReference type="KEGG" id="pgn:PGN_1857"/>
<dbReference type="eggNOG" id="COG0198">
    <property type="taxonomic scope" value="Bacteria"/>
</dbReference>
<dbReference type="HOGENOM" id="CLU_093315_2_0_10"/>
<dbReference type="OrthoDB" id="9807419at2"/>
<dbReference type="BioCyc" id="PGIN431947:G1G2V-2071-MONOMER"/>
<dbReference type="Proteomes" id="UP000008842">
    <property type="component" value="Chromosome"/>
</dbReference>
<dbReference type="GO" id="GO:1990904">
    <property type="term" value="C:ribonucleoprotein complex"/>
    <property type="evidence" value="ECO:0007669"/>
    <property type="project" value="UniProtKB-KW"/>
</dbReference>
<dbReference type="GO" id="GO:0005840">
    <property type="term" value="C:ribosome"/>
    <property type="evidence" value="ECO:0007669"/>
    <property type="project" value="UniProtKB-KW"/>
</dbReference>
<dbReference type="GO" id="GO:0019843">
    <property type="term" value="F:rRNA binding"/>
    <property type="evidence" value="ECO:0007669"/>
    <property type="project" value="UniProtKB-UniRule"/>
</dbReference>
<dbReference type="GO" id="GO:0003735">
    <property type="term" value="F:structural constituent of ribosome"/>
    <property type="evidence" value="ECO:0007669"/>
    <property type="project" value="InterPro"/>
</dbReference>
<dbReference type="GO" id="GO:0006412">
    <property type="term" value="P:translation"/>
    <property type="evidence" value="ECO:0007669"/>
    <property type="project" value="UniProtKB-UniRule"/>
</dbReference>
<dbReference type="CDD" id="cd06089">
    <property type="entry name" value="KOW_RPL26"/>
    <property type="match status" value="1"/>
</dbReference>
<dbReference type="FunFam" id="2.30.30.30:FF:000004">
    <property type="entry name" value="50S ribosomal protein L24"/>
    <property type="match status" value="1"/>
</dbReference>
<dbReference type="Gene3D" id="2.30.30.30">
    <property type="match status" value="1"/>
</dbReference>
<dbReference type="HAMAP" id="MF_01326_B">
    <property type="entry name" value="Ribosomal_uL24_B"/>
    <property type="match status" value="1"/>
</dbReference>
<dbReference type="InterPro" id="IPR005824">
    <property type="entry name" value="KOW"/>
</dbReference>
<dbReference type="InterPro" id="IPR014722">
    <property type="entry name" value="Rib_uL2_dom2"/>
</dbReference>
<dbReference type="InterPro" id="IPR003256">
    <property type="entry name" value="Ribosomal_uL24"/>
</dbReference>
<dbReference type="InterPro" id="IPR005825">
    <property type="entry name" value="Ribosomal_uL24_CS"/>
</dbReference>
<dbReference type="InterPro" id="IPR041988">
    <property type="entry name" value="Ribosomal_uL24_KOW"/>
</dbReference>
<dbReference type="InterPro" id="IPR008991">
    <property type="entry name" value="Translation_prot_SH3-like_sf"/>
</dbReference>
<dbReference type="NCBIfam" id="TIGR01079">
    <property type="entry name" value="rplX_bact"/>
    <property type="match status" value="1"/>
</dbReference>
<dbReference type="PANTHER" id="PTHR12903">
    <property type="entry name" value="MITOCHONDRIAL RIBOSOMAL PROTEIN L24"/>
    <property type="match status" value="1"/>
</dbReference>
<dbReference type="Pfam" id="PF00467">
    <property type="entry name" value="KOW"/>
    <property type="match status" value="1"/>
</dbReference>
<dbReference type="Pfam" id="PF17136">
    <property type="entry name" value="ribosomal_L24"/>
    <property type="match status" value="1"/>
</dbReference>
<dbReference type="SMART" id="SM00739">
    <property type="entry name" value="KOW"/>
    <property type="match status" value="1"/>
</dbReference>
<dbReference type="SUPFAM" id="SSF50104">
    <property type="entry name" value="Translation proteins SH3-like domain"/>
    <property type="match status" value="1"/>
</dbReference>
<dbReference type="PROSITE" id="PS01108">
    <property type="entry name" value="RIBOSOMAL_L24"/>
    <property type="match status" value="1"/>
</dbReference>
<gene>
    <name evidence="1" type="primary">rplX</name>
    <name type="ordered locus">PGN_1857</name>
</gene>